<accession>Q2NCY8</accession>
<proteinExistence type="inferred from homology"/>
<reference key="1">
    <citation type="journal article" date="2009" name="J. Bacteriol.">
        <title>Complete genome sequence of Erythrobacter litoralis HTCC2594.</title>
        <authorList>
            <person name="Oh H.M."/>
            <person name="Giovannoni S.J."/>
            <person name="Ferriera S."/>
            <person name="Johnson J."/>
            <person name="Cho J.C."/>
        </authorList>
    </citation>
    <scope>NUCLEOTIDE SEQUENCE [LARGE SCALE GENOMIC DNA]</scope>
    <source>
        <strain>HTCC2594</strain>
    </source>
</reference>
<organism>
    <name type="scientific">Erythrobacter litoralis (strain HTCC2594)</name>
    <dbReference type="NCBI Taxonomy" id="314225"/>
    <lineage>
        <taxon>Bacteria</taxon>
        <taxon>Pseudomonadati</taxon>
        <taxon>Pseudomonadota</taxon>
        <taxon>Alphaproteobacteria</taxon>
        <taxon>Sphingomonadales</taxon>
        <taxon>Erythrobacteraceae</taxon>
        <taxon>Erythrobacter/Porphyrobacter group</taxon>
        <taxon>Erythrobacter</taxon>
    </lineage>
</organism>
<gene>
    <name evidence="1" type="primary">murB</name>
    <name type="ordered locus">ELI_01805</name>
</gene>
<comment type="function">
    <text evidence="1">Cell wall formation.</text>
</comment>
<comment type="catalytic activity">
    <reaction evidence="1">
        <text>UDP-N-acetyl-alpha-D-muramate + NADP(+) = UDP-N-acetyl-3-O-(1-carboxyvinyl)-alpha-D-glucosamine + NADPH + H(+)</text>
        <dbReference type="Rhea" id="RHEA:12248"/>
        <dbReference type="ChEBI" id="CHEBI:15378"/>
        <dbReference type="ChEBI" id="CHEBI:57783"/>
        <dbReference type="ChEBI" id="CHEBI:58349"/>
        <dbReference type="ChEBI" id="CHEBI:68483"/>
        <dbReference type="ChEBI" id="CHEBI:70757"/>
        <dbReference type="EC" id="1.3.1.98"/>
    </reaction>
</comment>
<comment type="cofactor">
    <cofactor evidence="1">
        <name>FAD</name>
        <dbReference type="ChEBI" id="CHEBI:57692"/>
    </cofactor>
</comment>
<comment type="pathway">
    <text evidence="1">Cell wall biogenesis; peptidoglycan biosynthesis.</text>
</comment>
<comment type="subcellular location">
    <subcellularLocation>
        <location evidence="1">Cytoplasm</location>
    </subcellularLocation>
</comment>
<comment type="similarity">
    <text evidence="1">Belongs to the MurB family.</text>
</comment>
<feature type="chain" id="PRO_0000332458" description="UDP-N-acetylenolpyruvoylglucosamine reductase">
    <location>
        <begin position="1"/>
        <end position="323"/>
    </location>
</feature>
<feature type="domain" description="FAD-binding PCMH-type" evidence="1">
    <location>
        <begin position="52"/>
        <end position="217"/>
    </location>
</feature>
<feature type="region of interest" description="Disordered" evidence="2">
    <location>
        <begin position="234"/>
        <end position="253"/>
    </location>
</feature>
<feature type="compositionally biased region" description="Polar residues" evidence="2">
    <location>
        <begin position="235"/>
        <end position="249"/>
    </location>
</feature>
<feature type="active site" evidence="1">
    <location>
        <position position="197"/>
    </location>
</feature>
<feature type="active site" description="Proton donor" evidence="1">
    <location>
        <position position="246"/>
    </location>
</feature>
<feature type="active site" evidence="1">
    <location>
        <position position="316"/>
    </location>
</feature>
<protein>
    <recommendedName>
        <fullName evidence="1">UDP-N-acetylenolpyruvoylglucosamine reductase</fullName>
        <ecNumber evidence="1">1.3.1.98</ecNumber>
    </recommendedName>
    <alternativeName>
        <fullName evidence="1">UDP-N-acetylmuramate dehydrogenase</fullName>
    </alternativeName>
</protein>
<name>MURB_ERYLH</name>
<evidence type="ECO:0000255" key="1">
    <source>
        <dbReference type="HAMAP-Rule" id="MF_00037"/>
    </source>
</evidence>
<evidence type="ECO:0000256" key="2">
    <source>
        <dbReference type="SAM" id="MobiDB-lite"/>
    </source>
</evidence>
<dbReference type="EC" id="1.3.1.98" evidence="1"/>
<dbReference type="EMBL" id="CP000157">
    <property type="protein sequence ID" value="ABC62453.1"/>
    <property type="molecule type" value="Genomic_DNA"/>
</dbReference>
<dbReference type="RefSeq" id="WP_011413329.1">
    <property type="nucleotide sequence ID" value="NC_007722.1"/>
</dbReference>
<dbReference type="SMR" id="Q2NCY8"/>
<dbReference type="STRING" id="314225.ELI_01805"/>
<dbReference type="KEGG" id="eli:ELI_01805"/>
<dbReference type="eggNOG" id="COG0812">
    <property type="taxonomic scope" value="Bacteria"/>
</dbReference>
<dbReference type="HOGENOM" id="CLU_035304_1_0_5"/>
<dbReference type="UniPathway" id="UPA00219"/>
<dbReference type="Proteomes" id="UP000008808">
    <property type="component" value="Chromosome"/>
</dbReference>
<dbReference type="GO" id="GO:0005829">
    <property type="term" value="C:cytosol"/>
    <property type="evidence" value="ECO:0007669"/>
    <property type="project" value="TreeGrafter"/>
</dbReference>
<dbReference type="GO" id="GO:0071949">
    <property type="term" value="F:FAD binding"/>
    <property type="evidence" value="ECO:0007669"/>
    <property type="project" value="InterPro"/>
</dbReference>
<dbReference type="GO" id="GO:0008762">
    <property type="term" value="F:UDP-N-acetylmuramate dehydrogenase activity"/>
    <property type="evidence" value="ECO:0007669"/>
    <property type="project" value="UniProtKB-UniRule"/>
</dbReference>
<dbReference type="GO" id="GO:0051301">
    <property type="term" value="P:cell division"/>
    <property type="evidence" value="ECO:0007669"/>
    <property type="project" value="UniProtKB-KW"/>
</dbReference>
<dbReference type="GO" id="GO:0071555">
    <property type="term" value="P:cell wall organization"/>
    <property type="evidence" value="ECO:0007669"/>
    <property type="project" value="UniProtKB-KW"/>
</dbReference>
<dbReference type="GO" id="GO:0009252">
    <property type="term" value="P:peptidoglycan biosynthetic process"/>
    <property type="evidence" value="ECO:0007669"/>
    <property type="project" value="UniProtKB-UniRule"/>
</dbReference>
<dbReference type="GO" id="GO:0008360">
    <property type="term" value="P:regulation of cell shape"/>
    <property type="evidence" value="ECO:0007669"/>
    <property type="project" value="UniProtKB-KW"/>
</dbReference>
<dbReference type="Gene3D" id="3.30.465.10">
    <property type="match status" value="1"/>
</dbReference>
<dbReference type="Gene3D" id="3.90.78.10">
    <property type="entry name" value="UDP-N-acetylenolpyruvoylglucosamine reductase, C-terminal domain"/>
    <property type="match status" value="1"/>
</dbReference>
<dbReference type="Gene3D" id="3.30.43.10">
    <property type="entry name" value="Uridine Diphospho-n-acetylenolpyruvylglucosamine Reductase, domain 2"/>
    <property type="match status" value="1"/>
</dbReference>
<dbReference type="HAMAP" id="MF_00037">
    <property type="entry name" value="MurB"/>
    <property type="match status" value="1"/>
</dbReference>
<dbReference type="InterPro" id="IPR016166">
    <property type="entry name" value="FAD-bd_PCMH"/>
</dbReference>
<dbReference type="InterPro" id="IPR036318">
    <property type="entry name" value="FAD-bd_PCMH-like_sf"/>
</dbReference>
<dbReference type="InterPro" id="IPR016167">
    <property type="entry name" value="FAD-bd_PCMH_sub1"/>
</dbReference>
<dbReference type="InterPro" id="IPR016169">
    <property type="entry name" value="FAD-bd_PCMH_sub2"/>
</dbReference>
<dbReference type="InterPro" id="IPR003170">
    <property type="entry name" value="MurB"/>
</dbReference>
<dbReference type="InterPro" id="IPR011601">
    <property type="entry name" value="MurB_C"/>
</dbReference>
<dbReference type="InterPro" id="IPR036635">
    <property type="entry name" value="MurB_C_sf"/>
</dbReference>
<dbReference type="InterPro" id="IPR006094">
    <property type="entry name" value="Oxid_FAD_bind_N"/>
</dbReference>
<dbReference type="NCBIfam" id="TIGR00179">
    <property type="entry name" value="murB"/>
    <property type="match status" value="1"/>
</dbReference>
<dbReference type="NCBIfam" id="NF010480">
    <property type="entry name" value="PRK13905.1"/>
    <property type="match status" value="1"/>
</dbReference>
<dbReference type="PANTHER" id="PTHR21071">
    <property type="entry name" value="UDP-N-ACETYLENOLPYRUVOYLGLUCOSAMINE REDUCTASE"/>
    <property type="match status" value="1"/>
</dbReference>
<dbReference type="PANTHER" id="PTHR21071:SF4">
    <property type="entry name" value="UDP-N-ACETYLENOLPYRUVOYLGLUCOSAMINE REDUCTASE"/>
    <property type="match status" value="1"/>
</dbReference>
<dbReference type="Pfam" id="PF01565">
    <property type="entry name" value="FAD_binding_4"/>
    <property type="match status" value="1"/>
</dbReference>
<dbReference type="Pfam" id="PF02873">
    <property type="entry name" value="MurB_C"/>
    <property type="match status" value="1"/>
</dbReference>
<dbReference type="SUPFAM" id="SSF56176">
    <property type="entry name" value="FAD-binding/transporter-associated domain-like"/>
    <property type="match status" value="1"/>
</dbReference>
<dbReference type="SUPFAM" id="SSF56194">
    <property type="entry name" value="Uridine diphospho-N-Acetylenolpyruvylglucosamine reductase, MurB, C-terminal domain"/>
    <property type="match status" value="1"/>
</dbReference>
<dbReference type="PROSITE" id="PS51387">
    <property type="entry name" value="FAD_PCMH"/>
    <property type="match status" value="1"/>
</dbReference>
<keyword id="KW-0131">Cell cycle</keyword>
<keyword id="KW-0132">Cell division</keyword>
<keyword id="KW-0133">Cell shape</keyword>
<keyword id="KW-0961">Cell wall biogenesis/degradation</keyword>
<keyword id="KW-0963">Cytoplasm</keyword>
<keyword id="KW-0274">FAD</keyword>
<keyword id="KW-0285">Flavoprotein</keyword>
<keyword id="KW-0521">NADP</keyword>
<keyword id="KW-0560">Oxidoreductase</keyword>
<keyword id="KW-0573">Peptidoglycan synthesis</keyword>
<keyword id="KW-1185">Reference proteome</keyword>
<sequence length="323" mass="33981">MNTIQPDDWAMHDTGAAPTAEVEGAVAAPVPIEGIRGKLTNQAPLAKLVWFKSGGAADWLFEPADLDDLKTFLARLDGDLPVMALGLGSNLIIRDGGVPGVVIKLGKAFASVETHDDYTVTCGAGAHGVLVASTARDAGIAGLEFMRGIPGTIGGFVRMNAGAYGRETRDVLIDCDVVLPGGSFVTLPVADLQYTYRHSALPDGAVVVSARLQGEPGDPEIIGAEMERVAEAREQSQPVRTKTGGSTFKNPPGKKAWELVDAAGCRGLTMGGAQVSEKHTNFLINVDGATSADIEGLGEEVKRRVYAHSGVELEWEIQRVGRP</sequence>